<accession>Q9ZCR3</accession>
<keyword id="KW-1185">Reference proteome</keyword>
<keyword id="KW-0687">Ribonucleoprotein</keyword>
<keyword id="KW-0689">Ribosomal protein</keyword>
<feature type="chain" id="PRO_0000130445" description="Large ribosomal subunit protein uL29">
    <location>
        <begin position="1"/>
        <end position="71"/>
    </location>
</feature>
<proteinExistence type="inferred from homology"/>
<organism>
    <name type="scientific">Rickettsia prowazekii (strain Madrid E)</name>
    <dbReference type="NCBI Taxonomy" id="272947"/>
    <lineage>
        <taxon>Bacteria</taxon>
        <taxon>Pseudomonadati</taxon>
        <taxon>Pseudomonadota</taxon>
        <taxon>Alphaproteobacteria</taxon>
        <taxon>Rickettsiales</taxon>
        <taxon>Rickettsiaceae</taxon>
        <taxon>Rickettsieae</taxon>
        <taxon>Rickettsia</taxon>
        <taxon>typhus group</taxon>
    </lineage>
</organism>
<comment type="similarity">
    <text evidence="1">Belongs to the universal ribosomal protein uL29 family.</text>
</comment>
<evidence type="ECO:0000305" key="1"/>
<reference key="1">
    <citation type="journal article" date="1998" name="Nature">
        <title>The genome sequence of Rickettsia prowazekii and the origin of mitochondria.</title>
        <authorList>
            <person name="Andersson S.G.E."/>
            <person name="Zomorodipour A."/>
            <person name="Andersson J.O."/>
            <person name="Sicheritz-Ponten T."/>
            <person name="Alsmark U.C.M."/>
            <person name="Podowski R.M."/>
            <person name="Naeslund A.K."/>
            <person name="Eriksson A.-S."/>
            <person name="Winkler H.H."/>
            <person name="Kurland C.G."/>
        </authorList>
    </citation>
    <scope>NUCLEOTIDE SEQUENCE [LARGE SCALE GENOMIC DNA]</scope>
    <source>
        <strain>Madrid E</strain>
    </source>
</reference>
<protein>
    <recommendedName>
        <fullName evidence="1">Large ribosomal subunit protein uL29</fullName>
    </recommendedName>
    <alternativeName>
        <fullName>50S ribosomal protein L29</fullName>
    </alternativeName>
</protein>
<gene>
    <name type="primary">rpmC</name>
    <name type="ordered locus">RP651</name>
</gene>
<dbReference type="EMBL" id="AJ235272">
    <property type="protein sequence ID" value="CAA15091.1"/>
    <property type="molecule type" value="Genomic_DNA"/>
</dbReference>
<dbReference type="PIR" id="A71671">
    <property type="entry name" value="A71671"/>
</dbReference>
<dbReference type="RefSeq" id="NP_221015.1">
    <property type="nucleotide sequence ID" value="NC_000963.1"/>
</dbReference>
<dbReference type="RefSeq" id="WP_004596213.1">
    <property type="nucleotide sequence ID" value="NC_000963.1"/>
</dbReference>
<dbReference type="SMR" id="Q9ZCR3"/>
<dbReference type="STRING" id="272947.gene:17555728"/>
<dbReference type="EnsemblBacteria" id="CAA15091">
    <property type="protein sequence ID" value="CAA15091"/>
    <property type="gene ID" value="CAA15091"/>
</dbReference>
<dbReference type="GeneID" id="57569776"/>
<dbReference type="KEGG" id="rpr:RP651"/>
<dbReference type="PATRIC" id="fig|272947.5.peg.673"/>
<dbReference type="eggNOG" id="COG0255">
    <property type="taxonomic scope" value="Bacteria"/>
</dbReference>
<dbReference type="HOGENOM" id="CLU_158491_1_0_5"/>
<dbReference type="OrthoDB" id="9815192at2"/>
<dbReference type="Proteomes" id="UP000002480">
    <property type="component" value="Chromosome"/>
</dbReference>
<dbReference type="GO" id="GO:0022625">
    <property type="term" value="C:cytosolic large ribosomal subunit"/>
    <property type="evidence" value="ECO:0007669"/>
    <property type="project" value="TreeGrafter"/>
</dbReference>
<dbReference type="GO" id="GO:0003735">
    <property type="term" value="F:structural constituent of ribosome"/>
    <property type="evidence" value="ECO:0007669"/>
    <property type="project" value="InterPro"/>
</dbReference>
<dbReference type="GO" id="GO:0006412">
    <property type="term" value="P:translation"/>
    <property type="evidence" value="ECO:0007669"/>
    <property type="project" value="UniProtKB-UniRule"/>
</dbReference>
<dbReference type="CDD" id="cd00427">
    <property type="entry name" value="Ribosomal_L29_HIP"/>
    <property type="match status" value="1"/>
</dbReference>
<dbReference type="FunFam" id="1.10.287.310:FF:000001">
    <property type="entry name" value="50S ribosomal protein L29"/>
    <property type="match status" value="1"/>
</dbReference>
<dbReference type="Gene3D" id="1.10.287.310">
    <property type="match status" value="1"/>
</dbReference>
<dbReference type="HAMAP" id="MF_00374">
    <property type="entry name" value="Ribosomal_uL29"/>
    <property type="match status" value="1"/>
</dbReference>
<dbReference type="InterPro" id="IPR050063">
    <property type="entry name" value="Ribosomal_protein_uL29"/>
</dbReference>
<dbReference type="InterPro" id="IPR001854">
    <property type="entry name" value="Ribosomal_uL29"/>
</dbReference>
<dbReference type="InterPro" id="IPR018254">
    <property type="entry name" value="Ribosomal_uL29_CS"/>
</dbReference>
<dbReference type="InterPro" id="IPR036049">
    <property type="entry name" value="Ribosomal_uL29_sf"/>
</dbReference>
<dbReference type="NCBIfam" id="TIGR00012">
    <property type="entry name" value="L29"/>
    <property type="match status" value="1"/>
</dbReference>
<dbReference type="PANTHER" id="PTHR10916">
    <property type="entry name" value="60S RIBOSOMAL PROTEIN L35/50S RIBOSOMAL PROTEIN L29"/>
    <property type="match status" value="1"/>
</dbReference>
<dbReference type="PANTHER" id="PTHR10916:SF0">
    <property type="entry name" value="LARGE RIBOSOMAL SUBUNIT PROTEIN UL29C"/>
    <property type="match status" value="1"/>
</dbReference>
<dbReference type="Pfam" id="PF00831">
    <property type="entry name" value="Ribosomal_L29"/>
    <property type="match status" value="1"/>
</dbReference>
<dbReference type="SUPFAM" id="SSF46561">
    <property type="entry name" value="Ribosomal protein L29 (L29p)"/>
    <property type="match status" value="1"/>
</dbReference>
<dbReference type="PROSITE" id="PS00579">
    <property type="entry name" value="RIBOSOMAL_L29"/>
    <property type="match status" value="1"/>
</dbReference>
<sequence length="71" mass="8406">MNDLKLLRSKLSTETIEELYKNLNLLKKELFNLRFQQALGELKNTSRFSLVKKSIARIKTELTKRSNSEEY</sequence>
<name>RL29_RICPR</name>